<name>NPHR_RHOSO</name>
<keyword id="KW-0238">DNA-binding</keyword>
<keyword id="KW-0804">Transcription</keyword>
<keyword id="KW-0805">Transcription regulation</keyword>
<organism>
    <name type="scientific">Rhodococcus sp</name>
    <dbReference type="NCBI Taxonomy" id="1831"/>
    <lineage>
        <taxon>Bacteria</taxon>
        <taxon>Bacillati</taxon>
        <taxon>Actinomycetota</taxon>
        <taxon>Actinomycetes</taxon>
        <taxon>Mycobacteriales</taxon>
        <taxon>Nocardiaceae</taxon>
        <taxon>Rhodococcus</taxon>
    </lineage>
</organism>
<evidence type="ECO:0000255" key="1">
    <source>
        <dbReference type="PROSITE-ProRule" id="PRU00593"/>
    </source>
</evidence>
<evidence type="ECO:0000269" key="2">
    <source>
    </source>
</evidence>
<evidence type="ECO:0000269" key="3">
    <source>
    </source>
</evidence>
<comment type="function">
    <text evidence="2 3">Transcriptional activator of nphA1 and nphA2 involved in the degradation of 4-nitrophenol (4-NP).</text>
</comment>
<comment type="induction">
    <text evidence="3">Constitutively expressed.</text>
</comment>
<feature type="chain" id="PRO_0000418989" description="Transcriptional activator NphR">
    <location>
        <begin position="1"/>
        <end position="335"/>
    </location>
</feature>
<feature type="domain" description="HTH araC/xylS-type" evidence="1">
    <location>
        <begin position="231"/>
        <end position="329"/>
    </location>
</feature>
<feature type="DNA-binding region" description="H-T-H motif" evidence="1">
    <location>
        <begin position="249"/>
        <end position="270"/>
    </location>
</feature>
<feature type="DNA-binding region" description="H-T-H motif" evidence="1">
    <location>
        <begin position="296"/>
        <end position="319"/>
    </location>
</feature>
<reference key="1">
    <citation type="journal article" date="2003" name="J. Biosci. Bioeng.">
        <title>Cloning and characterization of a 4-nitrophenol hydroxylase gene cluster from Rhodococcus sp. PN1.</title>
        <authorList>
            <person name="Takeo M."/>
            <person name="Yasukawa T."/>
            <person name="Abe Y."/>
            <person name="Niihara S."/>
            <person name="Maeda Y."/>
            <person name="Negoro S."/>
        </authorList>
    </citation>
    <scope>NUCLEOTIDE SEQUENCE [GENOMIC DNA]</scope>
    <scope>FUNCTION IN THE DEGRADATION OF 4-NITROPHENOL</scope>
    <source>
        <strain>PN1</strain>
    </source>
</reference>
<reference key="2">
    <citation type="journal article" date="2008" name="J. Bacteriol.">
        <title>Mechanism of 4-nitrophenol oxidation in Rhodococcus sp. Strain PN1: characterization of the two-component 4-nitrophenol hydroxylase and regulation of its expression.</title>
        <authorList>
            <person name="Takeo M."/>
            <person name="Murakami M."/>
            <person name="Niihara S."/>
            <person name="Yamamoto K."/>
            <person name="Nishimura M."/>
            <person name="Kato D."/>
            <person name="Negoro S."/>
        </authorList>
    </citation>
    <scope>NUCLEOTIDE SEQUENCE [GENOMIC DNA]</scope>
    <scope>FUNCTION AS A TRANSCRIPTIONAL ACTIVATOR</scope>
    <scope>INDUCTION</scope>
    <source>
        <strain>PN1</strain>
    </source>
</reference>
<proteinExistence type="evidence at protein level"/>
<accession>B1Q2A8</accession>
<protein>
    <recommendedName>
        <fullName>Transcriptional activator NphR</fullName>
    </recommendedName>
</protein>
<gene>
    <name type="primary">nphR</name>
</gene>
<sequence>MAEREQSNDSARTDVPAIVSLRTRELDTGEGRMQWASTLERLYCETDVAWPEPRRHFDAEWGGRPFGDLHVSTIRADAHTVVRSPAMIQSDSGEGYLVCLVTDGSVEVRQSGRATVVEPGSFALLDCAAPFVFHSPAPFRQVVVRSPREVLTSRLPGRIVEHGTARSIHGDTGAGGLVGRLFVDIADMDAPMSQGAAVSFASSAVDMLATALTEGLLATSAADLHRTEDLTRVQRVIEQNLHDADITLSDIAAAAGMSLRTVHKLFNAEGTTTRAWLYQARLEAARRYLLTTDLSVADVSECAGFRDVSHFSRLFRSTFGSSPGLYRKEHARIGS</sequence>
<dbReference type="EMBL" id="AB081773">
    <property type="protein sequence ID" value="BAG24015.1"/>
    <property type="molecule type" value="Genomic_DNA"/>
</dbReference>
<dbReference type="SMR" id="B1Q2A8"/>
<dbReference type="GO" id="GO:0003700">
    <property type="term" value="F:DNA-binding transcription factor activity"/>
    <property type="evidence" value="ECO:0007669"/>
    <property type="project" value="InterPro"/>
</dbReference>
<dbReference type="GO" id="GO:0043565">
    <property type="term" value="F:sequence-specific DNA binding"/>
    <property type="evidence" value="ECO:0007669"/>
    <property type="project" value="InterPro"/>
</dbReference>
<dbReference type="GO" id="GO:0046196">
    <property type="term" value="P:4-nitrophenol catabolic process"/>
    <property type="evidence" value="ECO:0000314"/>
    <property type="project" value="UniProtKB"/>
</dbReference>
<dbReference type="GO" id="GO:0006355">
    <property type="term" value="P:regulation of DNA-templated transcription"/>
    <property type="evidence" value="ECO:0000314"/>
    <property type="project" value="UniProtKB"/>
</dbReference>
<dbReference type="Gene3D" id="1.10.10.60">
    <property type="entry name" value="Homeodomain-like"/>
    <property type="match status" value="1"/>
</dbReference>
<dbReference type="InterPro" id="IPR035418">
    <property type="entry name" value="AraC-bd_2"/>
</dbReference>
<dbReference type="InterPro" id="IPR050204">
    <property type="entry name" value="AraC_XylS_family_regulators"/>
</dbReference>
<dbReference type="InterPro" id="IPR009057">
    <property type="entry name" value="Homeodomain-like_sf"/>
</dbReference>
<dbReference type="InterPro" id="IPR018060">
    <property type="entry name" value="HTH_AraC"/>
</dbReference>
<dbReference type="InterPro" id="IPR018062">
    <property type="entry name" value="HTH_AraC-typ_CS"/>
</dbReference>
<dbReference type="InterPro" id="IPR020449">
    <property type="entry name" value="Tscrpt_reg_AraC-type_HTH"/>
</dbReference>
<dbReference type="PANTHER" id="PTHR46796:SF6">
    <property type="entry name" value="ARAC SUBFAMILY"/>
    <property type="match status" value="1"/>
</dbReference>
<dbReference type="PANTHER" id="PTHR46796">
    <property type="entry name" value="HTH-TYPE TRANSCRIPTIONAL ACTIVATOR RHAS-RELATED"/>
    <property type="match status" value="1"/>
</dbReference>
<dbReference type="Pfam" id="PF14525">
    <property type="entry name" value="AraC_binding_2"/>
    <property type="match status" value="1"/>
</dbReference>
<dbReference type="Pfam" id="PF12833">
    <property type="entry name" value="HTH_18"/>
    <property type="match status" value="1"/>
</dbReference>
<dbReference type="PRINTS" id="PR00032">
    <property type="entry name" value="HTHARAC"/>
</dbReference>
<dbReference type="SMART" id="SM00342">
    <property type="entry name" value="HTH_ARAC"/>
    <property type="match status" value="1"/>
</dbReference>
<dbReference type="SUPFAM" id="SSF46689">
    <property type="entry name" value="Homeodomain-like"/>
    <property type="match status" value="1"/>
</dbReference>
<dbReference type="PROSITE" id="PS00041">
    <property type="entry name" value="HTH_ARAC_FAMILY_1"/>
    <property type="match status" value="1"/>
</dbReference>
<dbReference type="PROSITE" id="PS01124">
    <property type="entry name" value="HTH_ARAC_FAMILY_2"/>
    <property type="match status" value="1"/>
</dbReference>